<sequence>MLDGKKLGALIKDKRKEKHLKQTEMAKALGMSRTYLSDIENGRYLPSTKTLSRIAILINLDLNVLKMTEIQVVEEGGYDRAAGTCRRQAL</sequence>
<accession>P13772</accession>
<name>IMMF_BPPH1</name>
<reference key="1">
    <citation type="journal article" date="1987" name="J. Mol. Biol.">
        <title>Transcriptional control in the EcoRI-F immunity region of Bacillus subtilis phage phi 105. Identification and unusual structure of the operator.</title>
        <authorList>
            <person name="van Kaer L."/>
            <person name="van Montagu M."/>
            <person name="Dhaese P."/>
        </authorList>
    </citation>
    <scope>NUCLEOTIDE SEQUENCE [GENOMIC DNA]</scope>
</reference>
<organism>
    <name type="scientific">Bacillus phage phi105</name>
    <name type="common">Bacteriophage phi-105</name>
    <dbReference type="NCBI Taxonomy" id="10717"/>
    <lineage>
        <taxon>Viruses</taxon>
        <taxon>Duplodnaviria</taxon>
        <taxon>Heunggongvirae</taxon>
        <taxon>Uroviricota</taxon>
        <taxon>Caudoviricetes</taxon>
        <taxon>Spizizenvirus</taxon>
        <taxon>Spizizenvirus sv105</taxon>
    </lineage>
</organism>
<organismHost>
    <name type="scientific">Bacillus subtilis</name>
    <dbReference type="NCBI Taxonomy" id="1423"/>
</organismHost>
<dbReference type="EMBL" id="X06090">
    <property type="protein sequence ID" value="CAA29475.1"/>
    <property type="molecule type" value="Genomic_DNA"/>
</dbReference>
<dbReference type="RefSeq" id="YP_009829906.1">
    <property type="nucleotide sequence ID" value="NC_048631.1"/>
</dbReference>
<dbReference type="SMR" id="P13772"/>
<dbReference type="GeneID" id="55599340"/>
<dbReference type="GO" id="GO:0003677">
    <property type="term" value="F:DNA binding"/>
    <property type="evidence" value="ECO:0007669"/>
    <property type="project" value="UniProtKB-KW"/>
</dbReference>
<dbReference type="CDD" id="cd00093">
    <property type="entry name" value="HTH_XRE"/>
    <property type="match status" value="1"/>
</dbReference>
<dbReference type="Gene3D" id="1.10.260.40">
    <property type="entry name" value="lambda repressor-like DNA-binding domains"/>
    <property type="match status" value="1"/>
</dbReference>
<dbReference type="InterPro" id="IPR001387">
    <property type="entry name" value="Cro/C1-type_HTH"/>
</dbReference>
<dbReference type="InterPro" id="IPR010982">
    <property type="entry name" value="Lambda_DNA-bd_dom_sf"/>
</dbReference>
<dbReference type="PANTHER" id="PTHR46558:SF4">
    <property type="entry name" value="DNA-BIDING PHAGE PROTEIN"/>
    <property type="match status" value="1"/>
</dbReference>
<dbReference type="PANTHER" id="PTHR46558">
    <property type="entry name" value="TRACRIPTIONAL REGULATORY PROTEIN-RELATED-RELATED"/>
    <property type="match status" value="1"/>
</dbReference>
<dbReference type="Pfam" id="PF01381">
    <property type="entry name" value="HTH_3"/>
    <property type="match status" value="1"/>
</dbReference>
<dbReference type="SMART" id="SM00530">
    <property type="entry name" value="HTH_XRE"/>
    <property type="match status" value="1"/>
</dbReference>
<dbReference type="SUPFAM" id="SSF47413">
    <property type="entry name" value="lambda repressor-like DNA-binding domains"/>
    <property type="match status" value="1"/>
</dbReference>
<dbReference type="PROSITE" id="PS50943">
    <property type="entry name" value="HTH_CROC1"/>
    <property type="match status" value="1"/>
</dbReference>
<proteinExistence type="predicted"/>
<feature type="initiator methionine" description="Removed; by host">
    <location>
        <position position="1"/>
    </location>
</feature>
<feature type="chain" id="PRO_0000149706" description="ImmF control region 10 kDa protein">
    <location>
        <begin position="2"/>
        <end position="90"/>
    </location>
</feature>
<feature type="domain" description="HTH cro/C1-type" evidence="1">
    <location>
        <begin position="11"/>
        <end position="65"/>
    </location>
</feature>
<feature type="DNA-binding region" description="H-T-H motif" evidence="1">
    <location>
        <begin position="22"/>
        <end position="41"/>
    </location>
</feature>
<protein>
    <recommendedName>
        <fullName>ImmF control region 10 kDa protein</fullName>
    </recommendedName>
</protein>
<keyword id="KW-0238">DNA-binding</keyword>
<evidence type="ECO:0000255" key="1">
    <source>
        <dbReference type="PROSITE-ProRule" id="PRU00257"/>
    </source>
</evidence>